<proteinExistence type="evidence at protein level"/>
<sequence>MADSLTEEQVSEYKEAFSLFDKDGDGQITTKELGTVMRSLGQNPSESELQDMINEVDADNNGTIDFPEFLTMMARKMKDTDSEEEIREAFKVFDRDNNGFISAAELRHVMTSIGEKLTDDEVDEMIREADQDGDGRIDYNEFVQLMMQK</sequence>
<accession>P60204</accession>
<accession>C8VLM3</accession>
<accession>P19533</accession>
<accession>Q5BBN3</accession>
<name>CALM_EMENI</name>
<feature type="initiator methionine" description="Removed" evidence="1">
    <location>
        <position position="1"/>
    </location>
</feature>
<feature type="chain" id="PRO_0000198318" description="Calmodulin">
    <location>
        <begin position="2"/>
        <end position="149"/>
    </location>
</feature>
<feature type="domain" description="EF-hand 1" evidence="2">
    <location>
        <begin position="8"/>
        <end position="43"/>
    </location>
</feature>
<feature type="domain" description="EF-hand 2" evidence="2">
    <location>
        <begin position="44"/>
        <end position="79"/>
    </location>
</feature>
<feature type="domain" description="EF-hand 3" evidence="2">
    <location>
        <begin position="81"/>
        <end position="116"/>
    </location>
</feature>
<feature type="domain" description="EF-hand 4" evidence="2">
    <location>
        <begin position="117"/>
        <end position="149"/>
    </location>
</feature>
<feature type="binding site" evidence="2">
    <location>
        <position position="21"/>
    </location>
    <ligand>
        <name>Ca(2+)</name>
        <dbReference type="ChEBI" id="CHEBI:29108"/>
        <label>1</label>
    </ligand>
</feature>
<feature type="binding site" evidence="2">
    <location>
        <position position="23"/>
    </location>
    <ligand>
        <name>Ca(2+)</name>
        <dbReference type="ChEBI" id="CHEBI:29108"/>
        <label>1</label>
    </ligand>
</feature>
<feature type="binding site" evidence="2">
    <location>
        <position position="25"/>
    </location>
    <ligand>
        <name>Ca(2+)</name>
        <dbReference type="ChEBI" id="CHEBI:29108"/>
        <label>1</label>
    </ligand>
</feature>
<feature type="binding site" evidence="2">
    <location>
        <position position="27"/>
    </location>
    <ligand>
        <name>Ca(2+)</name>
        <dbReference type="ChEBI" id="CHEBI:29108"/>
        <label>1</label>
    </ligand>
</feature>
<feature type="binding site" evidence="2">
    <location>
        <position position="32"/>
    </location>
    <ligand>
        <name>Ca(2+)</name>
        <dbReference type="ChEBI" id="CHEBI:29108"/>
        <label>1</label>
    </ligand>
</feature>
<feature type="binding site" evidence="2">
    <location>
        <position position="57"/>
    </location>
    <ligand>
        <name>Ca(2+)</name>
        <dbReference type="ChEBI" id="CHEBI:29108"/>
        <label>2</label>
    </ligand>
</feature>
<feature type="binding site" evidence="2">
    <location>
        <position position="59"/>
    </location>
    <ligand>
        <name>Ca(2+)</name>
        <dbReference type="ChEBI" id="CHEBI:29108"/>
        <label>2</label>
    </ligand>
</feature>
<feature type="binding site" evidence="2">
    <location>
        <position position="61"/>
    </location>
    <ligand>
        <name>Ca(2+)</name>
        <dbReference type="ChEBI" id="CHEBI:29108"/>
        <label>2</label>
    </ligand>
</feature>
<feature type="binding site" evidence="2">
    <location>
        <position position="63"/>
    </location>
    <ligand>
        <name>Ca(2+)</name>
        <dbReference type="ChEBI" id="CHEBI:29108"/>
        <label>2</label>
    </ligand>
</feature>
<feature type="binding site" evidence="2">
    <location>
        <position position="68"/>
    </location>
    <ligand>
        <name>Ca(2+)</name>
        <dbReference type="ChEBI" id="CHEBI:29108"/>
        <label>2</label>
    </ligand>
</feature>
<feature type="binding site" evidence="2">
    <location>
        <position position="94"/>
    </location>
    <ligand>
        <name>Ca(2+)</name>
        <dbReference type="ChEBI" id="CHEBI:29108"/>
        <label>3</label>
    </ligand>
</feature>
<feature type="binding site" evidence="2">
    <location>
        <position position="96"/>
    </location>
    <ligand>
        <name>Ca(2+)</name>
        <dbReference type="ChEBI" id="CHEBI:29108"/>
        <label>3</label>
    </ligand>
</feature>
<feature type="binding site" evidence="2">
    <location>
        <position position="98"/>
    </location>
    <ligand>
        <name>Ca(2+)</name>
        <dbReference type="ChEBI" id="CHEBI:29108"/>
        <label>3</label>
    </ligand>
</feature>
<feature type="binding site" evidence="2">
    <location>
        <position position="105"/>
    </location>
    <ligand>
        <name>Ca(2+)</name>
        <dbReference type="ChEBI" id="CHEBI:29108"/>
        <label>3</label>
    </ligand>
</feature>
<feature type="binding site" evidence="2">
    <location>
        <position position="130"/>
    </location>
    <ligand>
        <name>Ca(2+)</name>
        <dbReference type="ChEBI" id="CHEBI:29108"/>
        <label>4</label>
    </ligand>
</feature>
<feature type="binding site" evidence="2">
    <location>
        <position position="132"/>
    </location>
    <ligand>
        <name>Ca(2+)</name>
        <dbReference type="ChEBI" id="CHEBI:29108"/>
        <label>4</label>
    </ligand>
</feature>
<feature type="binding site" evidence="2">
    <location>
        <position position="134"/>
    </location>
    <ligand>
        <name>Ca(2+)</name>
        <dbReference type="ChEBI" id="CHEBI:29108"/>
        <label>4</label>
    </ligand>
</feature>
<feature type="binding site" evidence="2">
    <location>
        <position position="136"/>
    </location>
    <ligand>
        <name>Ca(2+)</name>
        <dbReference type="ChEBI" id="CHEBI:29108"/>
        <label>4</label>
    </ligand>
</feature>
<feature type="binding site" evidence="2">
    <location>
        <position position="141"/>
    </location>
    <ligand>
        <name>Ca(2+)</name>
        <dbReference type="ChEBI" id="CHEBI:29108"/>
        <label>4</label>
    </ligand>
</feature>
<feature type="modified residue" description="N-acetylalanine" evidence="1">
    <location>
        <position position="2"/>
    </location>
</feature>
<feature type="helix" evidence="4">
    <location>
        <begin position="7"/>
        <end position="20"/>
    </location>
</feature>
<feature type="strand" evidence="4">
    <location>
        <begin position="25"/>
        <end position="28"/>
    </location>
</feature>
<feature type="helix" evidence="4">
    <location>
        <begin position="30"/>
        <end position="39"/>
    </location>
</feature>
<feature type="helix" evidence="4">
    <location>
        <begin position="46"/>
        <end position="56"/>
    </location>
</feature>
<feature type="strand" evidence="4">
    <location>
        <begin position="61"/>
        <end position="65"/>
    </location>
</feature>
<feature type="helix" evidence="4">
    <location>
        <begin position="66"/>
        <end position="73"/>
    </location>
</feature>
<feature type="turn" evidence="4">
    <location>
        <begin position="78"/>
        <end position="83"/>
    </location>
</feature>
<feature type="helix" evidence="4">
    <location>
        <begin position="84"/>
        <end position="93"/>
    </location>
</feature>
<feature type="strand" evidence="4">
    <location>
        <begin position="98"/>
        <end position="102"/>
    </location>
</feature>
<feature type="helix" evidence="4">
    <location>
        <begin position="103"/>
        <end position="113"/>
    </location>
</feature>
<feature type="helix" evidence="4">
    <location>
        <begin position="119"/>
        <end position="129"/>
    </location>
</feature>
<feature type="strand" evidence="4">
    <location>
        <begin position="133"/>
        <end position="138"/>
    </location>
</feature>
<feature type="helix" evidence="4">
    <location>
        <begin position="139"/>
        <end position="144"/>
    </location>
</feature>
<protein>
    <recommendedName>
        <fullName>Calmodulin</fullName>
        <shortName>CaM</shortName>
    </recommendedName>
</protein>
<dbReference type="EMBL" id="J05545">
    <property type="protein sequence ID" value="AAA62800.1"/>
    <property type="molecule type" value="Genomic_DNA"/>
</dbReference>
<dbReference type="EMBL" id="AACD01000032">
    <property type="protein sequence ID" value="EAA64879.1"/>
    <property type="status" value="ALT_SEQ"/>
    <property type="molecule type" value="Genomic_DNA"/>
</dbReference>
<dbReference type="EMBL" id="BN001307">
    <property type="protein sequence ID" value="CBF86075.1"/>
    <property type="molecule type" value="Genomic_DNA"/>
</dbReference>
<dbReference type="PIR" id="A37123">
    <property type="entry name" value="MCAS"/>
</dbReference>
<dbReference type="RefSeq" id="XP_659651.1">
    <property type="nucleotide sequence ID" value="XM_654559.1"/>
</dbReference>
<dbReference type="PDB" id="6XU4">
    <property type="method" value="X-ray"/>
    <property type="resolution" value="3.18 A"/>
    <property type="chains" value="A/B/E=1-149"/>
</dbReference>
<dbReference type="PDBsum" id="6XU4"/>
<dbReference type="SMR" id="P60204"/>
<dbReference type="FunCoup" id="P60204">
    <property type="interactions" value="739"/>
</dbReference>
<dbReference type="STRING" id="227321.P60204"/>
<dbReference type="EnsemblFungi" id="CBF86075">
    <property type="protein sequence ID" value="CBF86075"/>
    <property type="gene ID" value="ANIA_02047"/>
</dbReference>
<dbReference type="KEGG" id="ani:ANIA_02047"/>
<dbReference type="VEuPathDB" id="FungiDB:AN2047"/>
<dbReference type="eggNOG" id="KOG0027">
    <property type="taxonomic scope" value="Eukaryota"/>
</dbReference>
<dbReference type="HOGENOM" id="CLU_061288_2_0_1"/>
<dbReference type="InParanoid" id="P60204"/>
<dbReference type="OMA" id="ARKMKEC"/>
<dbReference type="OrthoDB" id="26525at2759"/>
<dbReference type="Proteomes" id="UP000000560">
    <property type="component" value="Chromosome VII"/>
</dbReference>
<dbReference type="GO" id="GO:0051286">
    <property type="term" value="C:cell tip"/>
    <property type="evidence" value="ECO:0000318"/>
    <property type="project" value="GO_Central"/>
</dbReference>
<dbReference type="GO" id="GO:0005823">
    <property type="term" value="C:central plaque of spindle pole body"/>
    <property type="evidence" value="ECO:0000318"/>
    <property type="project" value="GO_Central"/>
</dbReference>
<dbReference type="GO" id="GO:0005737">
    <property type="term" value="C:cytoplasm"/>
    <property type="evidence" value="ECO:0000318"/>
    <property type="project" value="GO_Central"/>
</dbReference>
<dbReference type="GO" id="GO:0001411">
    <property type="term" value="C:hyphal tip"/>
    <property type="evidence" value="ECO:0000314"/>
    <property type="project" value="AspGD"/>
</dbReference>
<dbReference type="GO" id="GO:0005509">
    <property type="term" value="F:calcium ion binding"/>
    <property type="evidence" value="ECO:0000314"/>
    <property type="project" value="AspGD"/>
</dbReference>
<dbReference type="GO" id="GO:0030234">
    <property type="term" value="F:enzyme regulator activity"/>
    <property type="evidence" value="ECO:0000318"/>
    <property type="project" value="GO_Central"/>
</dbReference>
<dbReference type="GO" id="GO:0000226">
    <property type="term" value="P:microtubule cytoskeleton organization"/>
    <property type="evidence" value="ECO:0000318"/>
    <property type="project" value="GO_Central"/>
</dbReference>
<dbReference type="GO" id="GO:0051726">
    <property type="term" value="P:regulation of cell cycle"/>
    <property type="evidence" value="ECO:0000315"/>
    <property type="project" value="AspGD"/>
</dbReference>
<dbReference type="GO" id="GO:0051300">
    <property type="term" value="P:spindle pole body organization"/>
    <property type="evidence" value="ECO:0000318"/>
    <property type="project" value="GO_Central"/>
</dbReference>
<dbReference type="GO" id="GO:0009847">
    <property type="term" value="P:spore germination"/>
    <property type="evidence" value="ECO:0000315"/>
    <property type="project" value="AspGD"/>
</dbReference>
<dbReference type="CDD" id="cd00051">
    <property type="entry name" value="EFh"/>
    <property type="match status" value="1"/>
</dbReference>
<dbReference type="FunFam" id="1.10.238.10:FF:000058">
    <property type="entry name" value="Calmodulin"/>
    <property type="match status" value="1"/>
</dbReference>
<dbReference type="FunFam" id="1.10.238.10:FF:000257">
    <property type="entry name" value="Calmodulin"/>
    <property type="match status" value="1"/>
</dbReference>
<dbReference type="FunFam" id="1.10.238.10:FF:000027">
    <property type="entry name" value="Calmodulin (CaM)"/>
    <property type="match status" value="1"/>
</dbReference>
<dbReference type="Gene3D" id="1.10.238.10">
    <property type="entry name" value="EF-hand"/>
    <property type="match status" value="3"/>
</dbReference>
<dbReference type="InterPro" id="IPR050230">
    <property type="entry name" value="CALM/Myosin/TropC-like"/>
</dbReference>
<dbReference type="InterPro" id="IPR011992">
    <property type="entry name" value="EF-hand-dom_pair"/>
</dbReference>
<dbReference type="InterPro" id="IPR018247">
    <property type="entry name" value="EF_Hand_1_Ca_BS"/>
</dbReference>
<dbReference type="InterPro" id="IPR002048">
    <property type="entry name" value="EF_hand_dom"/>
</dbReference>
<dbReference type="PANTHER" id="PTHR23048:SF0">
    <property type="entry name" value="CALMODULIN LIKE 3"/>
    <property type="match status" value="1"/>
</dbReference>
<dbReference type="PANTHER" id="PTHR23048">
    <property type="entry name" value="MYOSIN LIGHT CHAIN 1, 3"/>
    <property type="match status" value="1"/>
</dbReference>
<dbReference type="Pfam" id="PF13499">
    <property type="entry name" value="EF-hand_7"/>
    <property type="match status" value="2"/>
</dbReference>
<dbReference type="PRINTS" id="PR00450">
    <property type="entry name" value="RECOVERIN"/>
</dbReference>
<dbReference type="SMART" id="SM00054">
    <property type="entry name" value="EFh"/>
    <property type="match status" value="4"/>
</dbReference>
<dbReference type="SMART" id="SM01184">
    <property type="entry name" value="efhand_Ca_insen"/>
    <property type="match status" value="1"/>
</dbReference>
<dbReference type="SUPFAM" id="SSF47473">
    <property type="entry name" value="EF-hand"/>
    <property type="match status" value="1"/>
</dbReference>
<dbReference type="PROSITE" id="PS00018">
    <property type="entry name" value="EF_HAND_1"/>
    <property type="match status" value="4"/>
</dbReference>
<dbReference type="PROSITE" id="PS50222">
    <property type="entry name" value="EF_HAND_2"/>
    <property type="match status" value="4"/>
</dbReference>
<gene>
    <name type="primary">camA</name>
    <name type="synonym">cam</name>
    <name type="ORF">AN2047</name>
</gene>
<evidence type="ECO:0000250" key="1"/>
<evidence type="ECO:0000255" key="2">
    <source>
        <dbReference type="PROSITE-ProRule" id="PRU00448"/>
    </source>
</evidence>
<evidence type="ECO:0000305" key="3"/>
<evidence type="ECO:0007829" key="4">
    <source>
        <dbReference type="PDB" id="6XU4"/>
    </source>
</evidence>
<organism>
    <name type="scientific">Emericella nidulans (strain FGSC A4 / ATCC 38163 / CBS 112.46 / NRRL 194 / M139)</name>
    <name type="common">Aspergillus nidulans</name>
    <dbReference type="NCBI Taxonomy" id="227321"/>
    <lineage>
        <taxon>Eukaryota</taxon>
        <taxon>Fungi</taxon>
        <taxon>Dikarya</taxon>
        <taxon>Ascomycota</taxon>
        <taxon>Pezizomycotina</taxon>
        <taxon>Eurotiomycetes</taxon>
        <taxon>Eurotiomycetidae</taxon>
        <taxon>Eurotiales</taxon>
        <taxon>Aspergillaceae</taxon>
        <taxon>Aspergillus</taxon>
        <taxon>Aspergillus subgen. Nidulantes</taxon>
    </lineage>
</organism>
<comment type="function">
    <text>Calmodulin mediates the control of a large number of enzymes, ion channels and other proteins by Ca(2+). Among the enzymes to be stimulated by the calmodulin-Ca(2+) complex are a number of protein kinases and phosphatases.</text>
</comment>
<comment type="miscellaneous">
    <text>This protein has four functional calcium-binding sites.</text>
</comment>
<comment type="similarity">
    <text evidence="3">Belongs to the calmodulin family.</text>
</comment>
<comment type="sequence caution" evidence="3">
    <conflict type="erroneous gene model prediction">
        <sequence resource="EMBL-CDS" id="EAA64879"/>
    </conflict>
</comment>
<keyword id="KW-0002">3D-structure</keyword>
<keyword id="KW-0007">Acetylation</keyword>
<keyword id="KW-0106">Calcium</keyword>
<keyword id="KW-0479">Metal-binding</keyword>
<keyword id="KW-1185">Reference proteome</keyword>
<keyword id="KW-0677">Repeat</keyword>
<reference key="1">
    <citation type="journal article" date="1990" name="J. Biol. Chem.">
        <title>Characterization and expression of the unique calmodulin gene of Aspergillus nidulans.</title>
        <authorList>
            <person name="Rasmussen C.D."/>
            <person name="Means R.L."/>
            <person name="Lu K.P."/>
            <person name="May G.S."/>
            <person name="Means A.R."/>
        </authorList>
    </citation>
    <scope>NUCLEOTIDE SEQUENCE [GENOMIC DNA]</scope>
    <source>
        <strain>R153</strain>
    </source>
</reference>
<reference key="2">
    <citation type="journal article" date="2005" name="Nature">
        <title>Sequencing of Aspergillus nidulans and comparative analysis with A. fumigatus and A. oryzae.</title>
        <authorList>
            <person name="Galagan J.E."/>
            <person name="Calvo S.E."/>
            <person name="Cuomo C."/>
            <person name="Ma L.-J."/>
            <person name="Wortman J.R."/>
            <person name="Batzoglou S."/>
            <person name="Lee S.-I."/>
            <person name="Bastuerkmen M."/>
            <person name="Spevak C.C."/>
            <person name="Clutterbuck J."/>
            <person name="Kapitonov V."/>
            <person name="Jurka J."/>
            <person name="Scazzocchio C."/>
            <person name="Farman M.L."/>
            <person name="Butler J."/>
            <person name="Purcell S."/>
            <person name="Harris S."/>
            <person name="Braus G.H."/>
            <person name="Draht O."/>
            <person name="Busch S."/>
            <person name="D'Enfert C."/>
            <person name="Bouchier C."/>
            <person name="Goldman G.H."/>
            <person name="Bell-Pedersen D."/>
            <person name="Griffiths-Jones S."/>
            <person name="Doonan J.H."/>
            <person name="Yu J."/>
            <person name="Vienken K."/>
            <person name="Pain A."/>
            <person name="Freitag M."/>
            <person name="Selker E.U."/>
            <person name="Archer D.B."/>
            <person name="Penalva M.A."/>
            <person name="Oakley B.R."/>
            <person name="Momany M."/>
            <person name="Tanaka T."/>
            <person name="Kumagai T."/>
            <person name="Asai K."/>
            <person name="Machida M."/>
            <person name="Nierman W.C."/>
            <person name="Denning D.W."/>
            <person name="Caddick M.X."/>
            <person name="Hynes M."/>
            <person name="Paoletti M."/>
            <person name="Fischer R."/>
            <person name="Miller B.L."/>
            <person name="Dyer P.S."/>
            <person name="Sachs M.S."/>
            <person name="Osmani S.A."/>
            <person name="Birren B.W."/>
        </authorList>
    </citation>
    <scope>NUCLEOTIDE SEQUENCE [LARGE SCALE GENOMIC DNA]</scope>
    <source>
        <strain>FGSC A4 / ATCC 38163 / CBS 112.46 / NRRL 194 / M139</strain>
    </source>
</reference>
<reference key="3">
    <citation type="journal article" date="2009" name="Fungal Genet. Biol.">
        <title>The 2008 update of the Aspergillus nidulans genome annotation: a community effort.</title>
        <authorList>
            <person name="Wortman J.R."/>
            <person name="Gilsenan J.M."/>
            <person name="Joardar V."/>
            <person name="Deegan J."/>
            <person name="Clutterbuck J."/>
            <person name="Andersen M.R."/>
            <person name="Archer D."/>
            <person name="Bencina M."/>
            <person name="Braus G."/>
            <person name="Coutinho P."/>
            <person name="von Dohren H."/>
            <person name="Doonan J."/>
            <person name="Driessen A.J."/>
            <person name="Durek P."/>
            <person name="Espeso E."/>
            <person name="Fekete E."/>
            <person name="Flipphi M."/>
            <person name="Estrada C.G."/>
            <person name="Geysens S."/>
            <person name="Goldman G."/>
            <person name="de Groot P.W."/>
            <person name="Hansen K."/>
            <person name="Harris S.D."/>
            <person name="Heinekamp T."/>
            <person name="Helmstaedt K."/>
            <person name="Henrissat B."/>
            <person name="Hofmann G."/>
            <person name="Homan T."/>
            <person name="Horio T."/>
            <person name="Horiuchi H."/>
            <person name="James S."/>
            <person name="Jones M."/>
            <person name="Karaffa L."/>
            <person name="Karanyi Z."/>
            <person name="Kato M."/>
            <person name="Keller N."/>
            <person name="Kelly D.E."/>
            <person name="Kiel J.A."/>
            <person name="Kim J.M."/>
            <person name="van der Klei I.J."/>
            <person name="Klis F.M."/>
            <person name="Kovalchuk A."/>
            <person name="Krasevec N."/>
            <person name="Kubicek C.P."/>
            <person name="Liu B."/>
            <person name="Maccabe A."/>
            <person name="Meyer V."/>
            <person name="Mirabito P."/>
            <person name="Miskei M."/>
            <person name="Mos M."/>
            <person name="Mullins J."/>
            <person name="Nelson D.R."/>
            <person name="Nielsen J."/>
            <person name="Oakley B.R."/>
            <person name="Osmani S.A."/>
            <person name="Pakula T."/>
            <person name="Paszewski A."/>
            <person name="Paulsen I."/>
            <person name="Pilsyk S."/>
            <person name="Pocsi I."/>
            <person name="Punt P.J."/>
            <person name="Ram A.F."/>
            <person name="Ren Q."/>
            <person name="Robellet X."/>
            <person name="Robson G."/>
            <person name="Seiboth B."/>
            <person name="van Solingen P."/>
            <person name="Specht T."/>
            <person name="Sun J."/>
            <person name="Taheri-Talesh N."/>
            <person name="Takeshita N."/>
            <person name="Ussery D."/>
            <person name="vanKuyk P.A."/>
            <person name="Visser H."/>
            <person name="van de Vondervoort P.J."/>
            <person name="de Vries R.P."/>
            <person name="Walton J."/>
            <person name="Xiang X."/>
            <person name="Xiong Y."/>
            <person name="Zeng A.P."/>
            <person name="Brandt B.W."/>
            <person name="Cornell M.J."/>
            <person name="van den Hondel C.A."/>
            <person name="Visser J."/>
            <person name="Oliver S.G."/>
            <person name="Turner G."/>
        </authorList>
    </citation>
    <scope>GENOME REANNOTATION</scope>
    <source>
        <strain>FGSC A4 / ATCC 38163 / CBS 112.46 / NRRL 194 / M139</strain>
    </source>
</reference>